<comment type="function">
    <text evidence="1">Involved in the biosynthesis of lipid A, a phosphorylated glycolipid that anchors the lipopolysaccharide to the outer membrane of the cell.</text>
</comment>
<comment type="catalytic activity">
    <reaction evidence="1">
        <text>a (3R)-hydroxyacyl-[ACP] + UDP-N-acetyl-alpha-D-glucosamine = a UDP-3-O-[(3R)-3-hydroxyacyl]-N-acetyl-alpha-D-glucosamine + holo-[ACP]</text>
        <dbReference type="Rhea" id="RHEA:67812"/>
        <dbReference type="Rhea" id="RHEA-COMP:9685"/>
        <dbReference type="Rhea" id="RHEA-COMP:9945"/>
        <dbReference type="ChEBI" id="CHEBI:57705"/>
        <dbReference type="ChEBI" id="CHEBI:64479"/>
        <dbReference type="ChEBI" id="CHEBI:78827"/>
        <dbReference type="ChEBI" id="CHEBI:173225"/>
        <dbReference type="EC" id="2.3.1.129"/>
    </reaction>
</comment>
<comment type="pathway">
    <text evidence="1">Glycolipid biosynthesis; lipid IV(A) biosynthesis; lipid IV(A) from (3R)-3-hydroxytetradecanoyl-[acyl-carrier-protein] and UDP-N-acetyl-alpha-D-glucosamine: step 1/6.</text>
</comment>
<comment type="subunit">
    <text evidence="1">Homotrimer.</text>
</comment>
<comment type="subcellular location">
    <subcellularLocation>
        <location evidence="1">Cytoplasm</location>
    </subcellularLocation>
</comment>
<comment type="similarity">
    <text evidence="1">Belongs to the transferase hexapeptide repeat family. LpxA subfamily.</text>
</comment>
<keyword id="KW-0012">Acyltransferase</keyword>
<keyword id="KW-0963">Cytoplasm</keyword>
<keyword id="KW-0441">Lipid A biosynthesis</keyword>
<keyword id="KW-0444">Lipid biosynthesis</keyword>
<keyword id="KW-0443">Lipid metabolism</keyword>
<keyword id="KW-0677">Repeat</keyword>
<keyword id="KW-0808">Transferase</keyword>
<name>LPXA_CUPPJ</name>
<dbReference type="EC" id="2.3.1.129" evidence="1"/>
<dbReference type="EMBL" id="CP000090">
    <property type="protein sequence ID" value="AAZ61234.1"/>
    <property type="molecule type" value="Genomic_DNA"/>
</dbReference>
<dbReference type="SMR" id="Q470E9"/>
<dbReference type="STRING" id="264198.Reut_A1869"/>
<dbReference type="KEGG" id="reu:Reut_A1869"/>
<dbReference type="eggNOG" id="COG1043">
    <property type="taxonomic scope" value="Bacteria"/>
</dbReference>
<dbReference type="HOGENOM" id="CLU_061249_0_0_4"/>
<dbReference type="OrthoDB" id="9807278at2"/>
<dbReference type="UniPathway" id="UPA00359">
    <property type="reaction ID" value="UER00477"/>
</dbReference>
<dbReference type="GO" id="GO:0005737">
    <property type="term" value="C:cytoplasm"/>
    <property type="evidence" value="ECO:0007669"/>
    <property type="project" value="UniProtKB-SubCell"/>
</dbReference>
<dbReference type="GO" id="GO:0016020">
    <property type="term" value="C:membrane"/>
    <property type="evidence" value="ECO:0007669"/>
    <property type="project" value="GOC"/>
</dbReference>
<dbReference type="GO" id="GO:0008780">
    <property type="term" value="F:acyl-[acyl-carrier-protein]-UDP-N-acetylglucosamine O-acyltransferase activity"/>
    <property type="evidence" value="ECO:0007669"/>
    <property type="project" value="UniProtKB-UniRule"/>
</dbReference>
<dbReference type="GO" id="GO:0009245">
    <property type="term" value="P:lipid A biosynthetic process"/>
    <property type="evidence" value="ECO:0007669"/>
    <property type="project" value="UniProtKB-UniRule"/>
</dbReference>
<dbReference type="CDD" id="cd03351">
    <property type="entry name" value="LbH_UDP-GlcNAc_AT"/>
    <property type="match status" value="1"/>
</dbReference>
<dbReference type="Gene3D" id="2.160.10.10">
    <property type="entry name" value="Hexapeptide repeat proteins"/>
    <property type="match status" value="1"/>
</dbReference>
<dbReference type="Gene3D" id="1.20.1180.10">
    <property type="entry name" value="Udp N-acetylglucosamine O-acyltransferase, C-terminal domain"/>
    <property type="match status" value="1"/>
</dbReference>
<dbReference type="HAMAP" id="MF_00387">
    <property type="entry name" value="LpxA"/>
    <property type="match status" value="1"/>
</dbReference>
<dbReference type="InterPro" id="IPR029098">
    <property type="entry name" value="Acetyltransf_C"/>
</dbReference>
<dbReference type="InterPro" id="IPR037157">
    <property type="entry name" value="Acetyltransf_C_sf"/>
</dbReference>
<dbReference type="InterPro" id="IPR001451">
    <property type="entry name" value="Hexapep"/>
</dbReference>
<dbReference type="InterPro" id="IPR018357">
    <property type="entry name" value="Hexapep_transf_CS"/>
</dbReference>
<dbReference type="InterPro" id="IPR010137">
    <property type="entry name" value="Lipid_A_LpxA"/>
</dbReference>
<dbReference type="InterPro" id="IPR011004">
    <property type="entry name" value="Trimer_LpxA-like_sf"/>
</dbReference>
<dbReference type="NCBIfam" id="TIGR01852">
    <property type="entry name" value="lipid_A_lpxA"/>
    <property type="match status" value="1"/>
</dbReference>
<dbReference type="NCBIfam" id="NF003657">
    <property type="entry name" value="PRK05289.1"/>
    <property type="match status" value="1"/>
</dbReference>
<dbReference type="PANTHER" id="PTHR43480">
    <property type="entry name" value="ACYL-[ACYL-CARRIER-PROTEIN]--UDP-N-ACETYLGLUCOSAMINE O-ACYLTRANSFERASE"/>
    <property type="match status" value="1"/>
</dbReference>
<dbReference type="PANTHER" id="PTHR43480:SF1">
    <property type="entry name" value="ACYL-[ACYL-CARRIER-PROTEIN]--UDP-N-ACETYLGLUCOSAMINE O-ACYLTRANSFERASE, MITOCHONDRIAL-RELATED"/>
    <property type="match status" value="1"/>
</dbReference>
<dbReference type="Pfam" id="PF13720">
    <property type="entry name" value="Acetyltransf_11"/>
    <property type="match status" value="1"/>
</dbReference>
<dbReference type="Pfam" id="PF00132">
    <property type="entry name" value="Hexapep"/>
    <property type="match status" value="2"/>
</dbReference>
<dbReference type="PIRSF" id="PIRSF000456">
    <property type="entry name" value="UDP-GlcNAc_acltr"/>
    <property type="match status" value="1"/>
</dbReference>
<dbReference type="SUPFAM" id="SSF51161">
    <property type="entry name" value="Trimeric LpxA-like enzymes"/>
    <property type="match status" value="1"/>
</dbReference>
<dbReference type="PROSITE" id="PS00101">
    <property type="entry name" value="HEXAPEP_TRANSFERASES"/>
    <property type="match status" value="1"/>
</dbReference>
<organism>
    <name type="scientific">Cupriavidus pinatubonensis (strain JMP 134 / LMG 1197)</name>
    <name type="common">Cupriavidus necator (strain JMP 134)</name>
    <dbReference type="NCBI Taxonomy" id="264198"/>
    <lineage>
        <taxon>Bacteria</taxon>
        <taxon>Pseudomonadati</taxon>
        <taxon>Pseudomonadota</taxon>
        <taxon>Betaproteobacteria</taxon>
        <taxon>Burkholderiales</taxon>
        <taxon>Burkholderiaceae</taxon>
        <taxon>Cupriavidus</taxon>
    </lineage>
</organism>
<accession>Q470E9</accession>
<proteinExistence type="inferred from homology"/>
<protein>
    <recommendedName>
        <fullName evidence="1">Acyl-[acyl-carrier-protein]--UDP-N-acetylglucosamine O-acyltransferase</fullName>
        <shortName evidence="1">UDP-N-acetylglucosamine acyltransferase</shortName>
        <ecNumber evidence="1">2.3.1.129</ecNumber>
    </recommendedName>
</protein>
<sequence>MTQIHPTALVDPKAELAADVTVGPFSIVGPNVRIGSGTSIGAHSTVEGHTTIGQGNNIGPYASVGGVPQDMKYRNEPTRLDIGDRNTIREFTTIHTGTVQDRGVTTIGSDNWIMAYVHIAHDCTVGNHTVFSSNAQIAGHVEVGDWAILGGMSGVHQFVRIGAHAMLGGASALVQDVPPFVIAASDKNGNKATPHGINVEGLRRRGFDAGQIAGLRQAYKLLYKSDLSFDEARNEIAALLAQADASAAEPLRAFLDFIAATQRGIVR</sequence>
<feature type="chain" id="PRO_0000302596" description="Acyl-[acyl-carrier-protein]--UDP-N-acetylglucosamine O-acyltransferase">
    <location>
        <begin position="1"/>
        <end position="267"/>
    </location>
</feature>
<evidence type="ECO:0000255" key="1">
    <source>
        <dbReference type="HAMAP-Rule" id="MF_00387"/>
    </source>
</evidence>
<gene>
    <name evidence="1" type="primary">lpxA</name>
    <name type="ordered locus">Reut_A1869</name>
</gene>
<reference key="1">
    <citation type="journal article" date="2010" name="PLoS ONE">
        <title>The complete multipartite genome sequence of Cupriavidus necator JMP134, a versatile pollutant degrader.</title>
        <authorList>
            <person name="Lykidis A."/>
            <person name="Perez-Pantoja D."/>
            <person name="Ledger T."/>
            <person name="Mavromatis K."/>
            <person name="Anderson I.J."/>
            <person name="Ivanova N.N."/>
            <person name="Hooper S.D."/>
            <person name="Lapidus A."/>
            <person name="Lucas S."/>
            <person name="Gonzalez B."/>
            <person name="Kyrpides N.C."/>
        </authorList>
    </citation>
    <scope>NUCLEOTIDE SEQUENCE [LARGE SCALE GENOMIC DNA]</scope>
    <source>
        <strain>JMP134 / LMG 1197</strain>
    </source>
</reference>